<feature type="signal peptide" evidence="2">
    <location>
        <begin position="1"/>
        <end position="35"/>
    </location>
</feature>
<feature type="chain" id="PRO_0000275415" description="Cytochrome f">
    <location>
        <begin position="36"/>
        <end position="320"/>
    </location>
</feature>
<feature type="transmembrane region" description="Helical" evidence="2">
    <location>
        <begin position="286"/>
        <end position="306"/>
    </location>
</feature>
<feature type="binding site" description="axial binding residue" evidence="2">
    <location>
        <position position="36"/>
    </location>
    <ligand>
        <name>heme</name>
        <dbReference type="ChEBI" id="CHEBI:30413"/>
    </ligand>
    <ligandPart>
        <name>Fe</name>
        <dbReference type="ChEBI" id="CHEBI:18248"/>
    </ligandPart>
</feature>
<feature type="binding site" description="covalent" evidence="2">
    <location>
        <position position="56"/>
    </location>
    <ligand>
        <name>heme</name>
        <dbReference type="ChEBI" id="CHEBI:30413"/>
    </ligand>
</feature>
<feature type="binding site" description="covalent" evidence="2">
    <location>
        <position position="59"/>
    </location>
    <ligand>
        <name>heme</name>
        <dbReference type="ChEBI" id="CHEBI:30413"/>
    </ligand>
</feature>
<feature type="binding site" description="axial binding residue" evidence="2">
    <location>
        <position position="60"/>
    </location>
    <ligand>
        <name>heme</name>
        <dbReference type="ChEBI" id="CHEBI:30413"/>
    </ligand>
    <ligandPart>
        <name>Fe</name>
        <dbReference type="ChEBI" id="CHEBI:18248"/>
    </ligandPart>
</feature>
<dbReference type="EMBL" id="AP009123">
    <property type="protein sequence ID" value="BAF41260.1"/>
    <property type="molecule type" value="Genomic_DNA"/>
</dbReference>
<dbReference type="RefSeq" id="YP_913200.1">
    <property type="nucleotide sequence ID" value="NC_008641.1"/>
</dbReference>
<dbReference type="SMR" id="A0ZZ48"/>
<dbReference type="GeneID" id="4575205"/>
<dbReference type="GO" id="GO:0009535">
    <property type="term" value="C:chloroplast thylakoid membrane"/>
    <property type="evidence" value="ECO:0007669"/>
    <property type="project" value="UniProtKB-SubCell"/>
</dbReference>
<dbReference type="GO" id="GO:0009055">
    <property type="term" value="F:electron transfer activity"/>
    <property type="evidence" value="ECO:0007669"/>
    <property type="project" value="UniProtKB-UniRule"/>
</dbReference>
<dbReference type="GO" id="GO:0020037">
    <property type="term" value="F:heme binding"/>
    <property type="evidence" value="ECO:0007669"/>
    <property type="project" value="InterPro"/>
</dbReference>
<dbReference type="GO" id="GO:0005506">
    <property type="term" value="F:iron ion binding"/>
    <property type="evidence" value="ECO:0007669"/>
    <property type="project" value="InterPro"/>
</dbReference>
<dbReference type="GO" id="GO:0015979">
    <property type="term" value="P:photosynthesis"/>
    <property type="evidence" value="ECO:0007669"/>
    <property type="project" value="UniProtKB-UniRule"/>
</dbReference>
<dbReference type="FunFam" id="1.20.5.700:FF:000001">
    <property type="entry name" value="Cytochrome f"/>
    <property type="match status" value="1"/>
</dbReference>
<dbReference type="FunFam" id="2.40.50.100:FF:000007">
    <property type="entry name" value="Cytochrome f"/>
    <property type="match status" value="1"/>
</dbReference>
<dbReference type="FunFam" id="2.60.40.830:FF:000001">
    <property type="entry name" value="Cytochrome f"/>
    <property type="match status" value="1"/>
</dbReference>
<dbReference type="Gene3D" id="2.40.50.100">
    <property type="match status" value="1"/>
</dbReference>
<dbReference type="Gene3D" id="2.60.40.830">
    <property type="entry name" value="Cytochrome f large domain"/>
    <property type="match status" value="1"/>
</dbReference>
<dbReference type="Gene3D" id="1.20.5.700">
    <property type="entry name" value="Single helix bin"/>
    <property type="match status" value="1"/>
</dbReference>
<dbReference type="HAMAP" id="MF_00610">
    <property type="entry name" value="Cytb6_f_cytF"/>
    <property type="match status" value="1"/>
</dbReference>
<dbReference type="InterPro" id="IPR024058">
    <property type="entry name" value="Cyt-f_TM"/>
</dbReference>
<dbReference type="InterPro" id="IPR002325">
    <property type="entry name" value="Cyt_f"/>
</dbReference>
<dbReference type="InterPro" id="IPR024094">
    <property type="entry name" value="Cyt_f_lg_dom"/>
</dbReference>
<dbReference type="InterPro" id="IPR036826">
    <property type="entry name" value="Cyt_f_lg_dom_sf"/>
</dbReference>
<dbReference type="InterPro" id="IPR011054">
    <property type="entry name" value="Rudment_hybrid_motif"/>
</dbReference>
<dbReference type="PANTHER" id="PTHR33288">
    <property type="match status" value="1"/>
</dbReference>
<dbReference type="PANTHER" id="PTHR33288:SF10">
    <property type="entry name" value="CYTOCHROME F"/>
    <property type="match status" value="1"/>
</dbReference>
<dbReference type="Pfam" id="PF01333">
    <property type="entry name" value="Apocytochr_F_C"/>
    <property type="match status" value="1"/>
</dbReference>
<dbReference type="Pfam" id="PF16639">
    <property type="entry name" value="Apocytochr_F_N"/>
    <property type="match status" value="1"/>
</dbReference>
<dbReference type="PRINTS" id="PR00610">
    <property type="entry name" value="CYTOCHROMEF"/>
</dbReference>
<dbReference type="SUPFAM" id="SSF103431">
    <property type="entry name" value="Cytochrome f subunit of the cytochrome b6f complex, transmembrane anchor"/>
    <property type="match status" value="1"/>
</dbReference>
<dbReference type="SUPFAM" id="SSF49441">
    <property type="entry name" value="Cytochrome f, large domain"/>
    <property type="match status" value="1"/>
</dbReference>
<dbReference type="SUPFAM" id="SSF51246">
    <property type="entry name" value="Rudiment single hybrid motif"/>
    <property type="match status" value="1"/>
</dbReference>
<dbReference type="PROSITE" id="PS51010">
    <property type="entry name" value="CYTF"/>
    <property type="match status" value="1"/>
</dbReference>
<keyword id="KW-0150">Chloroplast</keyword>
<keyword id="KW-0249">Electron transport</keyword>
<keyword id="KW-0349">Heme</keyword>
<keyword id="KW-0408">Iron</keyword>
<keyword id="KW-0472">Membrane</keyword>
<keyword id="KW-0479">Metal-binding</keyword>
<keyword id="KW-0602">Photosynthesis</keyword>
<keyword id="KW-0934">Plastid</keyword>
<keyword id="KW-0732">Signal</keyword>
<keyword id="KW-0793">Thylakoid</keyword>
<keyword id="KW-0812">Transmembrane</keyword>
<keyword id="KW-1133">Transmembrane helix</keyword>
<keyword id="KW-0813">Transport</keyword>
<organism>
    <name type="scientific">Gossypium barbadense</name>
    <name type="common">Sea Island cotton</name>
    <name type="synonym">Hibiscus barbadensis</name>
    <dbReference type="NCBI Taxonomy" id="3634"/>
    <lineage>
        <taxon>Eukaryota</taxon>
        <taxon>Viridiplantae</taxon>
        <taxon>Streptophyta</taxon>
        <taxon>Embryophyta</taxon>
        <taxon>Tracheophyta</taxon>
        <taxon>Spermatophyta</taxon>
        <taxon>Magnoliopsida</taxon>
        <taxon>eudicotyledons</taxon>
        <taxon>Gunneridae</taxon>
        <taxon>Pentapetalae</taxon>
        <taxon>rosids</taxon>
        <taxon>malvids</taxon>
        <taxon>Malvales</taxon>
        <taxon>Malvaceae</taxon>
        <taxon>Malvoideae</taxon>
        <taxon>Gossypium</taxon>
    </lineage>
</organism>
<proteinExistence type="inferred from homology"/>
<accession>A0ZZ48</accession>
<geneLocation type="chloroplast"/>
<sequence>MQTRNTFSWIKEEITRSISVSLMIYIITGASISNAYPIFAQQGYENPREATGRIVCANCHLANKPVDIEVPQAVLPDTVFEAVVRIPYDMQLKQVLANGKKGALNVGAVLILPEGFELAPPDRISPEMKEKIGNLSFQNYRPTKKNILVIGPVPGKKYSEITFPILSPDPASNKDAHFLKYPIYVGGNRGRGQIYPDGNKSNNTVYNATATGIISKIIRKEKGGYEITITDALDGHQVVDIIPPGPELLVSEGESIKLDQPLTINPNVGGFGQGDAEIVLQDPLRVQGLLFFLASIVFAQIFLVLKKKQFEKVQVSEMNF</sequence>
<comment type="function">
    <text evidence="2">Component of the cytochrome b6-f complex, which mediates electron transfer between photosystem II (PSII) and photosystem I (PSI), cyclic electron flow around PSI, and state transitions.</text>
</comment>
<comment type="cofactor">
    <cofactor evidence="2">
        <name>heme</name>
        <dbReference type="ChEBI" id="CHEBI:30413"/>
    </cofactor>
    <text evidence="2">Binds 1 heme group covalently.</text>
</comment>
<comment type="subunit">
    <text evidence="1">The 4 large subunits of the cytochrome b6-f complex are cytochrome b6, subunit IV (17 kDa polypeptide, petD), cytochrome f and the Rieske protein, while the 4 small subunits are PetG, PetL, PetM and PetN. The complex functions as a dimer (By similarity).</text>
</comment>
<comment type="subcellular location">
    <subcellularLocation>
        <location evidence="2">Plastid</location>
        <location evidence="2">Chloroplast thylakoid membrane</location>
        <topology evidence="2">Single-pass membrane protein</topology>
    </subcellularLocation>
</comment>
<comment type="similarity">
    <text evidence="2">Belongs to the cytochrome f family.</text>
</comment>
<evidence type="ECO:0000250" key="1"/>
<evidence type="ECO:0000255" key="2">
    <source>
        <dbReference type="HAMAP-Rule" id="MF_00610"/>
    </source>
</evidence>
<reference key="1">
    <citation type="journal article" date="2006" name="Genes Genet. Syst.">
        <title>Complete nucleotide sequence of the cotton (Gossypium barbadense L.) chloroplast genome with a comparative analysis of sequences among 9 dicot plants.</title>
        <authorList>
            <person name="Ibrahim R.I.H."/>
            <person name="Azuma J."/>
            <person name="Sakamoto M."/>
        </authorList>
    </citation>
    <scope>NUCLEOTIDE SEQUENCE [LARGE SCALE GENOMIC DNA]</scope>
</reference>
<protein>
    <recommendedName>
        <fullName evidence="2">Cytochrome f</fullName>
    </recommendedName>
</protein>
<gene>
    <name evidence="2" type="primary">petA</name>
</gene>
<name>CYF_GOSBA</name>